<feature type="chain" id="PRO_0000399703" description="Altered inheritance of mitochondria protein 32">
    <location>
        <begin position="1"/>
        <end position="311"/>
    </location>
</feature>
<dbReference type="EMBL" id="ACFL01000172">
    <property type="protein sequence ID" value="EEU06356.1"/>
    <property type="molecule type" value="Genomic_DNA"/>
</dbReference>
<dbReference type="SMR" id="C7GS66"/>
<dbReference type="Proteomes" id="UP000008073">
    <property type="component" value="Unassembled WGS sequence"/>
</dbReference>
<dbReference type="CDD" id="cd03062">
    <property type="entry name" value="TRX_Fd_Sucrase"/>
    <property type="match status" value="1"/>
</dbReference>
<dbReference type="InterPro" id="IPR009737">
    <property type="entry name" value="Aim32/Apd1-like"/>
</dbReference>
<dbReference type="InterPro" id="IPR036249">
    <property type="entry name" value="Thioredoxin-like_sf"/>
</dbReference>
<dbReference type="PANTHER" id="PTHR31902">
    <property type="entry name" value="ACTIN PATCHES DISTAL PROTEIN 1"/>
    <property type="match status" value="1"/>
</dbReference>
<dbReference type="PANTHER" id="PTHR31902:SF7">
    <property type="entry name" value="ALTERED INHERITANCE OF MITOCHONDRIA PROTEIN 32"/>
    <property type="match status" value="1"/>
</dbReference>
<dbReference type="Pfam" id="PF06999">
    <property type="entry name" value="Suc_Fer-like"/>
    <property type="match status" value="1"/>
</dbReference>
<dbReference type="SUPFAM" id="SSF52833">
    <property type="entry name" value="Thioredoxin-like"/>
    <property type="match status" value="1"/>
</dbReference>
<evidence type="ECO:0000305" key="1"/>
<comment type="similarity">
    <text evidence="1">Belongs to the AIM32 family.</text>
</comment>
<organism>
    <name type="scientific">Saccharomyces cerevisiae (strain JAY291)</name>
    <name type="common">Baker's yeast</name>
    <dbReference type="NCBI Taxonomy" id="574961"/>
    <lineage>
        <taxon>Eukaryota</taxon>
        <taxon>Fungi</taxon>
        <taxon>Dikarya</taxon>
        <taxon>Ascomycota</taxon>
        <taxon>Saccharomycotina</taxon>
        <taxon>Saccharomycetes</taxon>
        <taxon>Saccharomycetales</taxon>
        <taxon>Saccharomycetaceae</taxon>
        <taxon>Saccharomyces</taxon>
    </lineage>
</organism>
<accession>C7GS66</accession>
<name>AIM32_YEAS2</name>
<gene>
    <name type="primary">AIM32</name>
    <name type="ORF">C1Q_03218</name>
</gene>
<sequence>MLRITVKTLQQRASFHHSFKHISVPDLHTRAQNDQTNCYCQEINARLPSKTDPLDPHIKLPHRTPNYNKHVLLLSPGDRFAQPWKVAWNHNLDTNTNRPYNAISKLRSHLGGSPGILINAVHLQNEFIPRPKQHDEWLYFFVIPDMKLYVIKETDIEEFASFLDEGAIQAPKLSFQDYLSGKAKASQQVHEVHHRKLTRFQGETFLRDWNLVCGHYKRDAKCGEMGPDIIAAFQDEKLFPENNLALISHIGGHIFAGNVIFYKLFGREKMQNKLDSLWFGKVYPHNLKLLCENLENGKIIDEMYRGGISMN</sequence>
<proteinExistence type="inferred from homology"/>
<protein>
    <recommendedName>
        <fullName>Altered inheritance of mitochondria protein 32</fullName>
    </recommendedName>
</protein>
<reference key="1">
    <citation type="journal article" date="2009" name="Genome Res.">
        <title>Genome structure of a Saccharomyces cerevisiae strain widely used in bioethanol production.</title>
        <authorList>
            <person name="Argueso J.L."/>
            <person name="Carazzolle M.F."/>
            <person name="Mieczkowski P.A."/>
            <person name="Duarte F.M."/>
            <person name="Netto O.V.C."/>
            <person name="Missawa S.K."/>
            <person name="Galzerani F."/>
            <person name="Costa G.G.L."/>
            <person name="Vidal R.O."/>
            <person name="Noronha M.F."/>
            <person name="Dominska M."/>
            <person name="Andrietta M.G.S."/>
            <person name="Andrietta S.R."/>
            <person name="Cunha A.F."/>
            <person name="Gomes L.H."/>
            <person name="Tavares F.C.A."/>
            <person name="Alcarde A.R."/>
            <person name="Dietrich F.S."/>
            <person name="McCusker J.H."/>
            <person name="Petes T.D."/>
            <person name="Pereira G.A.G."/>
        </authorList>
    </citation>
    <scope>NUCLEOTIDE SEQUENCE [LARGE SCALE GENOMIC DNA]</scope>
    <source>
        <strain>JAY291</strain>
    </source>
</reference>